<accession>B7HDX3</accession>
<organism>
    <name type="scientific">Bacillus cereus (strain B4264)</name>
    <dbReference type="NCBI Taxonomy" id="405532"/>
    <lineage>
        <taxon>Bacteria</taxon>
        <taxon>Bacillati</taxon>
        <taxon>Bacillota</taxon>
        <taxon>Bacilli</taxon>
        <taxon>Bacillales</taxon>
        <taxon>Bacillaceae</taxon>
        <taxon>Bacillus</taxon>
        <taxon>Bacillus cereus group</taxon>
    </lineage>
</organism>
<evidence type="ECO:0000255" key="1">
    <source>
        <dbReference type="HAMAP-Rule" id="MF_01217"/>
    </source>
</evidence>
<evidence type="ECO:0000255" key="2">
    <source>
        <dbReference type="PROSITE-ProRule" id="PRU00258"/>
    </source>
</evidence>
<keyword id="KW-0963">Cytoplasm</keyword>
<keyword id="KW-0275">Fatty acid biosynthesis</keyword>
<keyword id="KW-0276">Fatty acid metabolism</keyword>
<keyword id="KW-0444">Lipid biosynthesis</keyword>
<keyword id="KW-0443">Lipid metabolism</keyword>
<keyword id="KW-0596">Phosphopantetheine</keyword>
<keyword id="KW-0597">Phosphoprotein</keyword>
<proteinExistence type="inferred from homology"/>
<comment type="function">
    <text evidence="1">Carrier of the growing fatty acid chain in fatty acid biosynthesis.</text>
</comment>
<comment type="pathway">
    <text evidence="1">Lipid metabolism; fatty acid biosynthesis.</text>
</comment>
<comment type="subcellular location">
    <subcellularLocation>
        <location evidence="1">Cytoplasm</location>
    </subcellularLocation>
</comment>
<comment type="PTM">
    <text evidence="1">4'-phosphopantetheine is transferred from CoA to a specific serine of apo-ACP by AcpS. This modification is essential for activity because fatty acids are bound in thioester linkage to the sulfhydryl of the prosthetic group.</text>
</comment>
<comment type="similarity">
    <text evidence="1">Belongs to the acyl carrier protein (ACP) family.</text>
</comment>
<dbReference type="EMBL" id="CP001176">
    <property type="protein sequence ID" value="ACK64103.1"/>
    <property type="molecule type" value="Genomic_DNA"/>
</dbReference>
<dbReference type="RefSeq" id="WP_000786062.1">
    <property type="nucleotide sequence ID" value="NZ_VEHB01000002.1"/>
</dbReference>
<dbReference type="SMR" id="B7HDX3"/>
<dbReference type="GeneID" id="93007262"/>
<dbReference type="KEGG" id="bcb:BCB4264_A3949"/>
<dbReference type="HOGENOM" id="CLU_108696_5_3_9"/>
<dbReference type="UniPathway" id="UPA00094"/>
<dbReference type="Proteomes" id="UP000007096">
    <property type="component" value="Chromosome"/>
</dbReference>
<dbReference type="GO" id="GO:0005829">
    <property type="term" value="C:cytosol"/>
    <property type="evidence" value="ECO:0007669"/>
    <property type="project" value="TreeGrafter"/>
</dbReference>
<dbReference type="GO" id="GO:0016020">
    <property type="term" value="C:membrane"/>
    <property type="evidence" value="ECO:0007669"/>
    <property type="project" value="GOC"/>
</dbReference>
<dbReference type="GO" id="GO:0000035">
    <property type="term" value="F:acyl binding"/>
    <property type="evidence" value="ECO:0007669"/>
    <property type="project" value="TreeGrafter"/>
</dbReference>
<dbReference type="GO" id="GO:0000036">
    <property type="term" value="F:acyl carrier activity"/>
    <property type="evidence" value="ECO:0007669"/>
    <property type="project" value="UniProtKB-UniRule"/>
</dbReference>
<dbReference type="GO" id="GO:0009245">
    <property type="term" value="P:lipid A biosynthetic process"/>
    <property type="evidence" value="ECO:0007669"/>
    <property type="project" value="TreeGrafter"/>
</dbReference>
<dbReference type="FunFam" id="1.10.1200.10:FF:000001">
    <property type="entry name" value="Acyl carrier protein"/>
    <property type="match status" value="1"/>
</dbReference>
<dbReference type="Gene3D" id="1.10.1200.10">
    <property type="entry name" value="ACP-like"/>
    <property type="match status" value="1"/>
</dbReference>
<dbReference type="HAMAP" id="MF_01217">
    <property type="entry name" value="Acyl_carrier"/>
    <property type="match status" value="1"/>
</dbReference>
<dbReference type="InterPro" id="IPR003231">
    <property type="entry name" value="ACP"/>
</dbReference>
<dbReference type="InterPro" id="IPR036736">
    <property type="entry name" value="ACP-like_sf"/>
</dbReference>
<dbReference type="InterPro" id="IPR009081">
    <property type="entry name" value="PP-bd_ACP"/>
</dbReference>
<dbReference type="InterPro" id="IPR006162">
    <property type="entry name" value="Ppantetheine_attach_site"/>
</dbReference>
<dbReference type="NCBIfam" id="TIGR00517">
    <property type="entry name" value="acyl_carrier"/>
    <property type="match status" value="1"/>
</dbReference>
<dbReference type="NCBIfam" id="NF002148">
    <property type="entry name" value="PRK00982.1-2"/>
    <property type="match status" value="1"/>
</dbReference>
<dbReference type="NCBIfam" id="NF002149">
    <property type="entry name" value="PRK00982.1-3"/>
    <property type="match status" value="1"/>
</dbReference>
<dbReference type="NCBIfam" id="NF002150">
    <property type="entry name" value="PRK00982.1-4"/>
    <property type="match status" value="1"/>
</dbReference>
<dbReference type="NCBIfam" id="NF002151">
    <property type="entry name" value="PRK00982.1-5"/>
    <property type="match status" value="1"/>
</dbReference>
<dbReference type="PANTHER" id="PTHR20863">
    <property type="entry name" value="ACYL CARRIER PROTEIN"/>
    <property type="match status" value="1"/>
</dbReference>
<dbReference type="PANTHER" id="PTHR20863:SF76">
    <property type="entry name" value="CARRIER DOMAIN-CONTAINING PROTEIN"/>
    <property type="match status" value="1"/>
</dbReference>
<dbReference type="Pfam" id="PF00550">
    <property type="entry name" value="PP-binding"/>
    <property type="match status" value="1"/>
</dbReference>
<dbReference type="SUPFAM" id="SSF47336">
    <property type="entry name" value="ACP-like"/>
    <property type="match status" value="1"/>
</dbReference>
<dbReference type="PROSITE" id="PS50075">
    <property type="entry name" value="CARRIER"/>
    <property type="match status" value="1"/>
</dbReference>
<dbReference type="PROSITE" id="PS00012">
    <property type="entry name" value="PHOSPHOPANTETHEINE"/>
    <property type="match status" value="1"/>
</dbReference>
<name>ACP_BACC4</name>
<feature type="chain" id="PRO_1000139000" description="Acyl carrier protein">
    <location>
        <begin position="1"/>
        <end position="77"/>
    </location>
</feature>
<feature type="domain" description="Carrier" evidence="2">
    <location>
        <begin position="2"/>
        <end position="77"/>
    </location>
</feature>
<feature type="modified residue" description="O-(pantetheine 4'-phosphoryl)serine" evidence="2">
    <location>
        <position position="37"/>
    </location>
</feature>
<reference key="1">
    <citation type="submission" date="2008-10" db="EMBL/GenBank/DDBJ databases">
        <title>Genome sequence of Bacillus cereus B4264.</title>
        <authorList>
            <person name="Dodson R.J."/>
            <person name="Durkin A.S."/>
            <person name="Rosovitz M.J."/>
            <person name="Rasko D.A."/>
            <person name="Hoffmaster A."/>
            <person name="Ravel J."/>
            <person name="Sutton G."/>
        </authorList>
    </citation>
    <scope>NUCLEOTIDE SEQUENCE [LARGE SCALE GENOMIC DNA]</scope>
    <source>
        <strain>B4264</strain>
    </source>
</reference>
<protein>
    <recommendedName>
        <fullName evidence="1">Acyl carrier protein</fullName>
        <shortName evidence="1">ACP</shortName>
    </recommendedName>
</protein>
<sequence>MADVLERVTKIIVDRLGVEETEVVPAASFKEDLGADSLDVVELVMQLEDEFEMEISDEDAEKIATVGDAVTYIESHL</sequence>
<gene>
    <name evidence="1" type="primary">acpP</name>
    <name type="ordered locus">BCB4264_A3949</name>
</gene>